<feature type="chain" id="PRO_0000445985" description="HTH-type transcriptional regulator FarR">
    <location>
        <begin position="1"/>
        <end position="146"/>
    </location>
</feature>
<feature type="domain" description="HTH marR-type" evidence="1">
    <location>
        <begin position="7"/>
        <end position="139"/>
    </location>
</feature>
<feature type="DNA-binding region" description="H-T-H motif" evidence="1">
    <location>
        <begin position="53"/>
        <end position="76"/>
    </location>
</feature>
<evidence type="ECO:0000255" key="1">
    <source>
        <dbReference type="PROSITE-ProRule" id="PRU00345"/>
    </source>
</evidence>
<evidence type="ECO:0000269" key="2">
    <source>
    </source>
</evidence>
<evidence type="ECO:0000269" key="3">
    <source>
    </source>
</evidence>
<evidence type="ECO:0000303" key="4">
    <source>
    </source>
</evidence>
<evidence type="ECO:0000305" key="5"/>
<evidence type="ECO:0000312" key="6">
    <source>
        <dbReference type="EMBL" id="AKP11729.1"/>
    </source>
</evidence>
<protein>
    <recommendedName>
        <fullName evidence="5">HTH-type transcriptional regulator FarR</fullName>
    </recommendedName>
</protein>
<keyword id="KW-0903">Direct protein sequencing</keyword>
<keyword id="KW-0238">DNA-binding</keyword>
<keyword id="KW-0678">Repressor</keyword>
<keyword id="KW-0804">Transcription</keyword>
<keyword id="KW-0805">Transcription regulation</keyword>
<comment type="function">
    <text evidence="2 3">Negatively controls expression of the farAB operon by binding directly to the farAB promoter region (PubMed:14645274, PubMed:16796676). Binds to three sites (sites A, B and C) within the DNA sequence upstream of farA (PubMed:16796676). Also represses its own expression (PubMed:14645274).</text>
</comment>
<comment type="activity regulation">
    <text evidence="3">Repressor activity requires the presence of the Integration Host Factor (IHF), which binds to sequences located between FarR binding sites A and C. IHF binding to the promoter region stabilizes the binding of FarR to its binding sites A and C and as a consequence, enhances repression of the farAB operon.</text>
</comment>
<comment type="induction">
    <text evidence="2">Repressed by the HTH-type transcriptional regulator MtrR. Negatively autoregulated.</text>
</comment>
<reference key="1">
    <citation type="journal article" date="2015" name="Genome Announc.">
        <title>Complete genome sequences of three Neisseria gonorrhoeae laboratory reference strains, determined using PacBio single-molecule real-time technology.</title>
        <authorList>
            <person name="Abrams A.J."/>
            <person name="Trees D.L."/>
            <person name="Nicholas R.A."/>
        </authorList>
    </citation>
    <scope>NUCLEOTIDE SEQUENCE [LARGE SCALE GENOMIC DNA]</scope>
    <source>
        <strain>FA19</strain>
    </source>
</reference>
<reference key="2">
    <citation type="journal article" date="2003" name="J. Bacteriol.">
        <title>FarR regulates the farAB-encoded efflux pump of Neisseria gonorrhoeae via an MtrR regulatory mechanism.</title>
        <authorList>
            <person name="Lee E.H."/>
            <person name="Rouquette-Loughlin C."/>
            <person name="Folster J.P."/>
            <person name="Shafer W.M."/>
        </authorList>
    </citation>
    <scope>PROTEIN SEQUENCE OF 1-9</scope>
    <scope>FUNCTION</scope>
    <scope>DNA-BINDING</scope>
    <scope>INDUCTION</scope>
    <source>
        <strain>FA19</strain>
    </source>
</reference>
<reference key="3">
    <citation type="journal article" date="2006" name="Mol. Microbiol.">
        <title>Integration Host Factor is required for FarR repression of the farAB-encoded efflux pump of Neisseria gonorrhoeae.</title>
        <authorList>
            <person name="Lee E.H."/>
            <person name="Hill S.A."/>
            <person name="Napier R."/>
            <person name="Shafer W.M."/>
        </authorList>
    </citation>
    <scope>FUNCTION</scope>
    <scope>DNA-BINDING</scope>
    <scope>ACTIVITY REGULATION</scope>
    <source>
        <strain>FA19</strain>
    </source>
</reference>
<proteinExistence type="evidence at protein level"/>
<name>FARR_NEIGO</name>
<organism>
    <name type="scientific">Neisseria gonorrhoeae</name>
    <dbReference type="NCBI Taxonomy" id="485"/>
    <lineage>
        <taxon>Bacteria</taxon>
        <taxon>Pseudomonadati</taxon>
        <taxon>Pseudomonadota</taxon>
        <taxon>Betaproteobacteria</taxon>
        <taxon>Neisseriales</taxon>
        <taxon>Neisseriaceae</taxon>
        <taxon>Neisseria</taxon>
    </lineage>
</organism>
<accession>P0DPR8</accession>
<gene>
    <name evidence="4" type="primary">farR</name>
    <name evidence="4" type="synonym">marR1</name>
    <name evidence="6" type="ORF">VT05_02083</name>
</gene>
<sequence>MPTQSKHASINIGLIQAREALMTQFRPILNQANITDQQWRIIRLLAENGTLDFQDLANQACILRPSLTGILTRLEKAGLVVRLKPSNDQRRVYLKLTSEGEKLYEEIGEEVDERYDAIEEVLGREKMLLLKDLLAELAKIEDALNS</sequence>
<dbReference type="EMBL" id="CP012026">
    <property type="protein sequence ID" value="AKP11729.1"/>
    <property type="molecule type" value="Genomic_DNA"/>
</dbReference>
<dbReference type="SMR" id="P0DPR8"/>
<dbReference type="GO" id="GO:0003677">
    <property type="term" value="F:DNA binding"/>
    <property type="evidence" value="ECO:0007669"/>
    <property type="project" value="UniProtKB-KW"/>
</dbReference>
<dbReference type="GO" id="GO:0003700">
    <property type="term" value="F:DNA-binding transcription factor activity"/>
    <property type="evidence" value="ECO:0007669"/>
    <property type="project" value="InterPro"/>
</dbReference>
<dbReference type="GO" id="GO:0045892">
    <property type="term" value="P:negative regulation of DNA-templated transcription"/>
    <property type="evidence" value="ECO:0007669"/>
    <property type="project" value="InterPro"/>
</dbReference>
<dbReference type="GO" id="GO:0006950">
    <property type="term" value="P:response to stress"/>
    <property type="evidence" value="ECO:0007669"/>
    <property type="project" value="TreeGrafter"/>
</dbReference>
<dbReference type="FunFam" id="1.10.10.10:FF:000301">
    <property type="entry name" value="Homoprotocatechuate degradation operon regulator HpaR"/>
    <property type="match status" value="1"/>
</dbReference>
<dbReference type="Gene3D" id="1.10.10.10">
    <property type="entry name" value="Winged helix-like DNA-binding domain superfamily/Winged helix DNA-binding domain"/>
    <property type="match status" value="1"/>
</dbReference>
<dbReference type="InterPro" id="IPR012712">
    <property type="entry name" value="HpaR/FarR"/>
</dbReference>
<dbReference type="InterPro" id="IPR000835">
    <property type="entry name" value="HTH_MarR-typ"/>
</dbReference>
<dbReference type="InterPro" id="IPR039422">
    <property type="entry name" value="MarR/SlyA-like"/>
</dbReference>
<dbReference type="InterPro" id="IPR023187">
    <property type="entry name" value="Tscrpt_reg_MarR-type_CS"/>
</dbReference>
<dbReference type="InterPro" id="IPR036388">
    <property type="entry name" value="WH-like_DNA-bd_sf"/>
</dbReference>
<dbReference type="InterPro" id="IPR036390">
    <property type="entry name" value="WH_DNA-bd_sf"/>
</dbReference>
<dbReference type="NCBIfam" id="TIGR02337">
    <property type="entry name" value="HpaR"/>
    <property type="match status" value="1"/>
</dbReference>
<dbReference type="PANTHER" id="PTHR33164:SF13">
    <property type="entry name" value="4-HYDROXYPHENYLACETATE CATABOLISM PROTEIN"/>
    <property type="match status" value="1"/>
</dbReference>
<dbReference type="PANTHER" id="PTHR33164">
    <property type="entry name" value="TRANSCRIPTIONAL REGULATOR, MARR FAMILY"/>
    <property type="match status" value="1"/>
</dbReference>
<dbReference type="Pfam" id="PF01047">
    <property type="entry name" value="MarR"/>
    <property type="match status" value="1"/>
</dbReference>
<dbReference type="PRINTS" id="PR00598">
    <property type="entry name" value="HTHMARR"/>
</dbReference>
<dbReference type="SMART" id="SM00347">
    <property type="entry name" value="HTH_MARR"/>
    <property type="match status" value="1"/>
</dbReference>
<dbReference type="SUPFAM" id="SSF46785">
    <property type="entry name" value="Winged helix' DNA-binding domain"/>
    <property type="match status" value="1"/>
</dbReference>
<dbReference type="PROSITE" id="PS01117">
    <property type="entry name" value="HTH_MARR_1"/>
    <property type="match status" value="1"/>
</dbReference>
<dbReference type="PROSITE" id="PS50995">
    <property type="entry name" value="HTH_MARR_2"/>
    <property type="match status" value="1"/>
</dbReference>